<keyword id="KW-0067">ATP-binding</keyword>
<keyword id="KW-1003">Cell membrane</keyword>
<keyword id="KW-0378">Hydrolase</keyword>
<keyword id="KW-0472">Membrane</keyword>
<keyword id="KW-0479">Metal-binding</keyword>
<keyword id="KW-0482">Metalloprotease</keyword>
<keyword id="KW-0547">Nucleotide-binding</keyword>
<keyword id="KW-0645">Protease</keyword>
<keyword id="KW-1185">Reference proteome</keyword>
<keyword id="KW-0812">Transmembrane</keyword>
<keyword id="KW-1133">Transmembrane helix</keyword>
<keyword id="KW-0862">Zinc</keyword>
<sequence>MQDQNNSNTPKKKKLSFWGIIGIVASILVLLVIAYIIYYYVSQTTVLKRDFSFLNRAIQEAAKSATDDIYFKSIVDNPYNNSLVATMQLPENVWAALNGMTSTSTRIRVVTFEVHATTSMKNILYNEIISSIGGATPSFSRGLAMILGYSENGVTKAGEFLSTGAPTESIWSTVLRYGTNIIFLLLFAASFIFMFMSFRSQRGTGGLLDNKSVAQRIYSNKKFSDIAGNEEVKEEVKELVDYLKNPKKYSTAGARIPKGILLGGPPGTGKTLIAKATAGEANVPFFFISASNFVEMFVGLGAKRVRDMFEEARKTAPAIIFIDELDAVGRSRGAGIGGGNDEREQTLNQLLVEMDGIKENSGILIMAATNRSDVLDPALLRPGRFDRTITVGLPDIKEREAILKLHAKGKRIANNVSFMMIARRTPGFSGAQLENVINEASLLSVRENTNVITLPQLDEAIDRVMAGPAKKSRTISEKENAAVAYHEAGHAVVGIKIKGGNKVQKITIIPRGHAGGYNLMMPEEEKYNRSKAELIAIITSFMGGRVAEAIIYGKDNVSTGASDDIAKATRIARKMVTEWGLSELGPIKYEEDTDNPFLGRDYMKNASFSAQVGQEIDQEIRKIILAAEANAHKIISENRELLELIKDALIINETIVAEEIEYIAKNMKLPPAITKTKEDLHEEYSDQDFDNLFNEVSGKKIISEDKYVDDLNKEIKQLEEKIEANKSSSKSTVNEEKSKDEKNN</sequence>
<protein>
    <recommendedName>
        <fullName evidence="1">ATP-dependent zinc metalloprotease FtsH</fullName>
        <ecNumber evidence="1">3.4.24.-</ecNumber>
    </recommendedName>
</protein>
<feature type="chain" id="PRO_0000400357" description="ATP-dependent zinc metalloprotease FtsH">
    <location>
        <begin position="1"/>
        <end position="744"/>
    </location>
</feature>
<feature type="topological domain" description="Cytoplasmic" evidence="1">
    <location>
        <begin position="1"/>
        <end position="16"/>
    </location>
</feature>
<feature type="transmembrane region" description="Helical" evidence="1">
    <location>
        <begin position="17"/>
        <end position="37"/>
    </location>
</feature>
<feature type="topological domain" description="Extracellular" evidence="1">
    <location>
        <begin position="38"/>
        <end position="177"/>
    </location>
</feature>
<feature type="transmembrane region" description="Helical" evidence="1">
    <location>
        <begin position="178"/>
        <end position="198"/>
    </location>
</feature>
<feature type="topological domain" description="Cytoplasmic" evidence="1">
    <location>
        <begin position="199"/>
        <end position="744"/>
    </location>
</feature>
<feature type="region of interest" description="Disordered" evidence="2">
    <location>
        <begin position="722"/>
        <end position="744"/>
    </location>
</feature>
<feature type="compositionally biased region" description="Basic and acidic residues" evidence="2">
    <location>
        <begin position="733"/>
        <end position="744"/>
    </location>
</feature>
<feature type="active site" evidence="1">
    <location>
        <position position="487"/>
    </location>
</feature>
<feature type="binding site" evidence="1">
    <location>
        <begin position="264"/>
        <end position="271"/>
    </location>
    <ligand>
        <name>ATP</name>
        <dbReference type="ChEBI" id="CHEBI:30616"/>
    </ligand>
</feature>
<feature type="binding site" evidence="1">
    <location>
        <position position="486"/>
    </location>
    <ligand>
        <name>Zn(2+)</name>
        <dbReference type="ChEBI" id="CHEBI:29105"/>
        <note>catalytic</note>
    </ligand>
</feature>
<feature type="binding site" evidence="1">
    <location>
        <position position="490"/>
    </location>
    <ligand>
        <name>Zn(2+)</name>
        <dbReference type="ChEBI" id="CHEBI:29105"/>
        <note>catalytic</note>
    </ligand>
</feature>
<feature type="binding site" evidence="1">
    <location>
        <position position="564"/>
    </location>
    <ligand>
        <name>Zn(2+)</name>
        <dbReference type="ChEBI" id="CHEBI:29105"/>
        <note>catalytic</note>
    </ligand>
</feature>
<accession>B3PNH3</accession>
<proteinExistence type="inferred from homology"/>
<name>FTSH_META1</name>
<organism>
    <name type="scientific">Metamycoplasma arthritidis (strain 158L3-1)</name>
    <name type="common">Mycoplasma arthritidis</name>
    <dbReference type="NCBI Taxonomy" id="243272"/>
    <lineage>
        <taxon>Bacteria</taxon>
        <taxon>Bacillati</taxon>
        <taxon>Mycoplasmatota</taxon>
        <taxon>Mycoplasmoidales</taxon>
        <taxon>Metamycoplasmataceae</taxon>
        <taxon>Metamycoplasma</taxon>
    </lineage>
</organism>
<gene>
    <name evidence="1" type="primary">ftsH</name>
    <name type="ordered locus">MARTH_orf856</name>
</gene>
<comment type="function">
    <text evidence="1">Acts as a processive, ATP-dependent zinc metallopeptidase for both cytoplasmic and membrane proteins. Plays a role in the quality control of integral membrane proteins.</text>
</comment>
<comment type="cofactor">
    <cofactor evidence="1">
        <name>Zn(2+)</name>
        <dbReference type="ChEBI" id="CHEBI:29105"/>
    </cofactor>
    <text evidence="1">Binds 1 zinc ion per subunit.</text>
</comment>
<comment type="subunit">
    <text evidence="1">Homohexamer.</text>
</comment>
<comment type="subcellular location">
    <subcellularLocation>
        <location evidence="1">Cell membrane</location>
        <topology evidence="1">Multi-pass membrane protein</topology>
        <orientation evidence="1">Cytoplasmic side</orientation>
    </subcellularLocation>
</comment>
<comment type="similarity">
    <text evidence="1">In the central section; belongs to the AAA ATPase family.</text>
</comment>
<comment type="similarity">
    <text evidence="1">In the C-terminal section; belongs to the peptidase M41 family.</text>
</comment>
<dbReference type="EC" id="3.4.24.-" evidence="1"/>
<dbReference type="EMBL" id="CP001047">
    <property type="protein sequence ID" value="ACF07575.1"/>
    <property type="molecule type" value="Genomic_DNA"/>
</dbReference>
<dbReference type="RefSeq" id="WP_012498532.1">
    <property type="nucleotide sequence ID" value="NC_011025.1"/>
</dbReference>
<dbReference type="SMR" id="B3PNH3"/>
<dbReference type="STRING" id="243272.MARTH_orf856"/>
<dbReference type="KEGG" id="mat:MARTH_orf856"/>
<dbReference type="eggNOG" id="COG0465">
    <property type="taxonomic scope" value="Bacteria"/>
</dbReference>
<dbReference type="HOGENOM" id="CLU_000688_16_2_14"/>
<dbReference type="Proteomes" id="UP000008812">
    <property type="component" value="Chromosome"/>
</dbReference>
<dbReference type="GO" id="GO:0005886">
    <property type="term" value="C:plasma membrane"/>
    <property type="evidence" value="ECO:0007669"/>
    <property type="project" value="UniProtKB-SubCell"/>
</dbReference>
<dbReference type="GO" id="GO:0005524">
    <property type="term" value="F:ATP binding"/>
    <property type="evidence" value="ECO:0007669"/>
    <property type="project" value="UniProtKB-UniRule"/>
</dbReference>
<dbReference type="GO" id="GO:0016887">
    <property type="term" value="F:ATP hydrolysis activity"/>
    <property type="evidence" value="ECO:0007669"/>
    <property type="project" value="UniProtKB-UniRule"/>
</dbReference>
<dbReference type="GO" id="GO:0004176">
    <property type="term" value="F:ATP-dependent peptidase activity"/>
    <property type="evidence" value="ECO:0007669"/>
    <property type="project" value="InterPro"/>
</dbReference>
<dbReference type="GO" id="GO:0004222">
    <property type="term" value="F:metalloendopeptidase activity"/>
    <property type="evidence" value="ECO:0007669"/>
    <property type="project" value="InterPro"/>
</dbReference>
<dbReference type="GO" id="GO:0008270">
    <property type="term" value="F:zinc ion binding"/>
    <property type="evidence" value="ECO:0007669"/>
    <property type="project" value="UniProtKB-UniRule"/>
</dbReference>
<dbReference type="GO" id="GO:0030163">
    <property type="term" value="P:protein catabolic process"/>
    <property type="evidence" value="ECO:0007669"/>
    <property type="project" value="UniProtKB-UniRule"/>
</dbReference>
<dbReference type="GO" id="GO:0006508">
    <property type="term" value="P:proteolysis"/>
    <property type="evidence" value="ECO:0007669"/>
    <property type="project" value="UniProtKB-KW"/>
</dbReference>
<dbReference type="CDD" id="cd19501">
    <property type="entry name" value="RecA-like_FtsH"/>
    <property type="match status" value="1"/>
</dbReference>
<dbReference type="FunFam" id="1.10.8.60:FF:000001">
    <property type="entry name" value="ATP-dependent zinc metalloprotease FtsH"/>
    <property type="match status" value="1"/>
</dbReference>
<dbReference type="FunFam" id="1.20.58.760:FF:000001">
    <property type="entry name" value="ATP-dependent zinc metalloprotease FtsH"/>
    <property type="match status" value="1"/>
</dbReference>
<dbReference type="FunFam" id="3.40.50.300:FF:000001">
    <property type="entry name" value="ATP-dependent zinc metalloprotease FtsH"/>
    <property type="match status" value="1"/>
</dbReference>
<dbReference type="Gene3D" id="1.10.8.60">
    <property type="match status" value="1"/>
</dbReference>
<dbReference type="Gene3D" id="3.40.50.300">
    <property type="entry name" value="P-loop containing nucleotide triphosphate hydrolases"/>
    <property type="match status" value="1"/>
</dbReference>
<dbReference type="Gene3D" id="1.20.58.760">
    <property type="entry name" value="Peptidase M41"/>
    <property type="match status" value="1"/>
</dbReference>
<dbReference type="HAMAP" id="MF_01458">
    <property type="entry name" value="FtsH"/>
    <property type="match status" value="1"/>
</dbReference>
<dbReference type="InterPro" id="IPR003593">
    <property type="entry name" value="AAA+_ATPase"/>
</dbReference>
<dbReference type="InterPro" id="IPR041569">
    <property type="entry name" value="AAA_lid_3"/>
</dbReference>
<dbReference type="InterPro" id="IPR003959">
    <property type="entry name" value="ATPase_AAA_core"/>
</dbReference>
<dbReference type="InterPro" id="IPR003960">
    <property type="entry name" value="ATPase_AAA_CS"/>
</dbReference>
<dbReference type="InterPro" id="IPR005936">
    <property type="entry name" value="FtsH"/>
</dbReference>
<dbReference type="InterPro" id="IPR027417">
    <property type="entry name" value="P-loop_NTPase"/>
</dbReference>
<dbReference type="InterPro" id="IPR000642">
    <property type="entry name" value="Peptidase_M41"/>
</dbReference>
<dbReference type="InterPro" id="IPR037219">
    <property type="entry name" value="Peptidase_M41-like"/>
</dbReference>
<dbReference type="NCBIfam" id="TIGR01241">
    <property type="entry name" value="FtsH_fam"/>
    <property type="match status" value="1"/>
</dbReference>
<dbReference type="PANTHER" id="PTHR23076:SF97">
    <property type="entry name" value="ATP-DEPENDENT ZINC METALLOPROTEASE YME1L1"/>
    <property type="match status" value="1"/>
</dbReference>
<dbReference type="PANTHER" id="PTHR23076">
    <property type="entry name" value="METALLOPROTEASE M41 FTSH"/>
    <property type="match status" value="1"/>
</dbReference>
<dbReference type="Pfam" id="PF00004">
    <property type="entry name" value="AAA"/>
    <property type="match status" value="1"/>
</dbReference>
<dbReference type="Pfam" id="PF17862">
    <property type="entry name" value="AAA_lid_3"/>
    <property type="match status" value="1"/>
</dbReference>
<dbReference type="Pfam" id="PF01434">
    <property type="entry name" value="Peptidase_M41"/>
    <property type="match status" value="1"/>
</dbReference>
<dbReference type="SMART" id="SM00382">
    <property type="entry name" value="AAA"/>
    <property type="match status" value="1"/>
</dbReference>
<dbReference type="SUPFAM" id="SSF140990">
    <property type="entry name" value="FtsH protease domain-like"/>
    <property type="match status" value="1"/>
</dbReference>
<dbReference type="SUPFAM" id="SSF52540">
    <property type="entry name" value="P-loop containing nucleoside triphosphate hydrolases"/>
    <property type="match status" value="1"/>
</dbReference>
<dbReference type="PROSITE" id="PS00674">
    <property type="entry name" value="AAA"/>
    <property type="match status" value="1"/>
</dbReference>
<evidence type="ECO:0000255" key="1">
    <source>
        <dbReference type="HAMAP-Rule" id="MF_01458"/>
    </source>
</evidence>
<evidence type="ECO:0000256" key="2">
    <source>
        <dbReference type="SAM" id="MobiDB-lite"/>
    </source>
</evidence>
<reference key="1">
    <citation type="journal article" date="2008" name="Infect. Immun.">
        <title>Genome of Mycoplasma arthritidis.</title>
        <authorList>
            <person name="Dybvig K."/>
            <person name="Zuhua C."/>
            <person name="Lao P."/>
            <person name="Jordan D.S."/>
            <person name="French C.T."/>
            <person name="Tu A.H."/>
            <person name="Loraine A.E."/>
        </authorList>
    </citation>
    <scope>NUCLEOTIDE SEQUENCE [LARGE SCALE GENOMIC DNA]</scope>
    <source>
        <strain>158L3-1</strain>
    </source>
</reference>